<name>SCPB_BACAN</name>
<keyword id="KW-0131">Cell cycle</keyword>
<keyword id="KW-0132">Cell division</keyword>
<keyword id="KW-0159">Chromosome partition</keyword>
<keyword id="KW-0963">Cytoplasm</keyword>
<keyword id="KW-1185">Reference proteome</keyword>
<feature type="chain" id="PRO_0000211122" description="Segregation and condensation protein B">
    <location>
        <begin position="1"/>
        <end position="190"/>
    </location>
</feature>
<sequence length="190" mass="21423">MDRTEQKSIIEGLLFVSGDEGIYPEQIAKVLEIEGNEVIDILEEMQKECEGAHRGLQIVQYAKVYRFATKKEHASYYQKLIEIPTAASLSQAALETLAIVAYRQPITRTEMEEIRGVKTDKALQTLVSHLLIKEMGRAEGPGRPILYGTTKEFLDTFGLKTLDDLPPLSEENEQMNEADLFFGSLQEISK</sequence>
<proteinExistence type="inferred from homology"/>
<dbReference type="EMBL" id="AE016879">
    <property type="protein sequence ID" value="AAP27996.2"/>
    <property type="molecule type" value="Genomic_DNA"/>
</dbReference>
<dbReference type="EMBL" id="AE017334">
    <property type="protein sequence ID" value="AAT35413.1"/>
    <property type="status" value="ALT_INIT"/>
    <property type="molecule type" value="Genomic_DNA"/>
</dbReference>
<dbReference type="EMBL" id="AE017225">
    <property type="protein sequence ID" value="AAT56268.1"/>
    <property type="molecule type" value="Genomic_DNA"/>
</dbReference>
<dbReference type="RefSeq" id="NP_846510.2">
    <property type="nucleotide sequence ID" value="NC_003997.3"/>
</dbReference>
<dbReference type="RefSeq" id="WP_000376225.1">
    <property type="nucleotide sequence ID" value="NZ_WXXJ01000027.1"/>
</dbReference>
<dbReference type="RefSeq" id="YP_030217.1">
    <property type="nucleotide sequence ID" value="NC_005945.1"/>
</dbReference>
<dbReference type="SMR" id="Q81MH2"/>
<dbReference type="STRING" id="261594.GBAA_4276"/>
<dbReference type="DNASU" id="1088147"/>
<dbReference type="GeneID" id="45023946"/>
<dbReference type="KEGG" id="ban:BA_4276"/>
<dbReference type="KEGG" id="bar:GBAA_4276"/>
<dbReference type="KEGG" id="bat:BAS3967"/>
<dbReference type="PATRIC" id="fig|198094.11.peg.4246"/>
<dbReference type="eggNOG" id="COG1386">
    <property type="taxonomic scope" value="Bacteria"/>
</dbReference>
<dbReference type="HOGENOM" id="CLU_045647_5_3_9"/>
<dbReference type="OMA" id="PGHPKLY"/>
<dbReference type="OrthoDB" id="9806226at2"/>
<dbReference type="Proteomes" id="UP000000427">
    <property type="component" value="Chromosome"/>
</dbReference>
<dbReference type="Proteomes" id="UP000000594">
    <property type="component" value="Chromosome"/>
</dbReference>
<dbReference type="GO" id="GO:0005737">
    <property type="term" value="C:cytoplasm"/>
    <property type="evidence" value="ECO:0007669"/>
    <property type="project" value="UniProtKB-SubCell"/>
</dbReference>
<dbReference type="GO" id="GO:0051301">
    <property type="term" value="P:cell division"/>
    <property type="evidence" value="ECO:0007669"/>
    <property type="project" value="UniProtKB-KW"/>
</dbReference>
<dbReference type="GO" id="GO:0051304">
    <property type="term" value="P:chromosome separation"/>
    <property type="evidence" value="ECO:0007669"/>
    <property type="project" value="InterPro"/>
</dbReference>
<dbReference type="GO" id="GO:0006260">
    <property type="term" value="P:DNA replication"/>
    <property type="evidence" value="ECO:0007669"/>
    <property type="project" value="UniProtKB-UniRule"/>
</dbReference>
<dbReference type="Gene3D" id="1.10.10.10">
    <property type="entry name" value="Winged helix-like DNA-binding domain superfamily/Winged helix DNA-binding domain"/>
    <property type="match status" value="2"/>
</dbReference>
<dbReference type="HAMAP" id="MF_01804">
    <property type="entry name" value="ScpB"/>
    <property type="match status" value="1"/>
</dbReference>
<dbReference type="InterPro" id="IPR005234">
    <property type="entry name" value="ScpB_csome_segregation"/>
</dbReference>
<dbReference type="InterPro" id="IPR036388">
    <property type="entry name" value="WH-like_DNA-bd_sf"/>
</dbReference>
<dbReference type="InterPro" id="IPR036390">
    <property type="entry name" value="WH_DNA-bd_sf"/>
</dbReference>
<dbReference type="NCBIfam" id="TIGR00281">
    <property type="entry name" value="SMC-Scp complex subunit ScpB"/>
    <property type="match status" value="1"/>
</dbReference>
<dbReference type="PANTHER" id="PTHR34298">
    <property type="entry name" value="SEGREGATION AND CONDENSATION PROTEIN B"/>
    <property type="match status" value="1"/>
</dbReference>
<dbReference type="PANTHER" id="PTHR34298:SF2">
    <property type="entry name" value="SEGREGATION AND CONDENSATION PROTEIN B"/>
    <property type="match status" value="1"/>
</dbReference>
<dbReference type="Pfam" id="PF04079">
    <property type="entry name" value="SMC_ScpB"/>
    <property type="match status" value="1"/>
</dbReference>
<dbReference type="PIRSF" id="PIRSF019345">
    <property type="entry name" value="ScpB"/>
    <property type="match status" value="1"/>
</dbReference>
<dbReference type="SUPFAM" id="SSF46785">
    <property type="entry name" value="Winged helix' DNA-binding domain"/>
    <property type="match status" value="2"/>
</dbReference>
<accession>Q81MH2</accession>
<accession>Q6HTX1</accession>
<accession>Q6KJ05</accession>
<evidence type="ECO:0000255" key="1">
    <source>
        <dbReference type="HAMAP-Rule" id="MF_01804"/>
    </source>
</evidence>
<evidence type="ECO:0000305" key="2"/>
<comment type="function">
    <text evidence="1">Participates in chromosomal partition during cell division. May act via the formation of a condensin-like complex containing Smc and ScpA that pull DNA away from mid-cell into both cell halves.</text>
</comment>
<comment type="subunit">
    <text evidence="1">Homodimer. Homodimerization may be required to stabilize the binding of ScpA to the Smc head domains. Component of a cohesin-like complex composed of ScpA, ScpB and the Smc homodimer, in which ScpA and ScpB bind to the head domain of Smc. The presence of the three proteins is required for the association of the complex with DNA.</text>
</comment>
<comment type="subcellular location">
    <subcellularLocation>
        <location evidence="1">Cytoplasm</location>
    </subcellularLocation>
    <text evidence="1">Associated with two foci at the outer edges of the nucleoid region in young cells, and at four foci within both cell halves in older cells.</text>
</comment>
<comment type="similarity">
    <text evidence="1">Belongs to the ScpB family.</text>
</comment>
<comment type="sequence caution" evidence="2">
    <conflict type="erroneous initiation">
        <sequence resource="EMBL-CDS" id="AAT35413"/>
    </conflict>
    <text>Truncated N-terminus.</text>
</comment>
<organism>
    <name type="scientific">Bacillus anthracis</name>
    <dbReference type="NCBI Taxonomy" id="1392"/>
    <lineage>
        <taxon>Bacteria</taxon>
        <taxon>Bacillati</taxon>
        <taxon>Bacillota</taxon>
        <taxon>Bacilli</taxon>
        <taxon>Bacillales</taxon>
        <taxon>Bacillaceae</taxon>
        <taxon>Bacillus</taxon>
        <taxon>Bacillus cereus group</taxon>
    </lineage>
</organism>
<gene>
    <name evidence="1" type="primary">scpB</name>
    <name type="ordered locus">BA_4276</name>
    <name type="ordered locus">GBAA_4276</name>
    <name type="ordered locus">BAS3967</name>
</gene>
<reference key="1">
    <citation type="journal article" date="2003" name="Nature">
        <title>The genome sequence of Bacillus anthracis Ames and comparison to closely related bacteria.</title>
        <authorList>
            <person name="Read T.D."/>
            <person name="Peterson S.N."/>
            <person name="Tourasse N.J."/>
            <person name="Baillie L.W."/>
            <person name="Paulsen I.T."/>
            <person name="Nelson K.E."/>
            <person name="Tettelin H."/>
            <person name="Fouts D.E."/>
            <person name="Eisen J.A."/>
            <person name="Gill S.R."/>
            <person name="Holtzapple E.K."/>
            <person name="Okstad O.A."/>
            <person name="Helgason E."/>
            <person name="Rilstone J."/>
            <person name="Wu M."/>
            <person name="Kolonay J.F."/>
            <person name="Beanan M.J."/>
            <person name="Dodson R.J."/>
            <person name="Brinkac L.M."/>
            <person name="Gwinn M.L."/>
            <person name="DeBoy R.T."/>
            <person name="Madpu R."/>
            <person name="Daugherty S.C."/>
            <person name="Durkin A.S."/>
            <person name="Haft D.H."/>
            <person name="Nelson W.C."/>
            <person name="Peterson J.D."/>
            <person name="Pop M."/>
            <person name="Khouri H.M."/>
            <person name="Radune D."/>
            <person name="Benton J.L."/>
            <person name="Mahamoud Y."/>
            <person name="Jiang L."/>
            <person name="Hance I.R."/>
            <person name="Weidman J.F."/>
            <person name="Berry K.J."/>
            <person name="Plaut R.D."/>
            <person name="Wolf A.M."/>
            <person name="Watkins K.L."/>
            <person name="Nierman W.C."/>
            <person name="Hazen A."/>
            <person name="Cline R.T."/>
            <person name="Redmond C."/>
            <person name="Thwaite J.E."/>
            <person name="White O."/>
            <person name="Salzberg S.L."/>
            <person name="Thomason B."/>
            <person name="Friedlander A.M."/>
            <person name="Koehler T.M."/>
            <person name="Hanna P.C."/>
            <person name="Kolstoe A.-B."/>
            <person name="Fraser C.M."/>
        </authorList>
    </citation>
    <scope>NUCLEOTIDE SEQUENCE [LARGE SCALE GENOMIC DNA]</scope>
    <source>
        <strain>Ames / isolate Porton</strain>
    </source>
</reference>
<reference key="2">
    <citation type="journal article" date="2009" name="J. Bacteriol.">
        <title>The complete genome sequence of Bacillus anthracis Ames 'Ancestor'.</title>
        <authorList>
            <person name="Ravel J."/>
            <person name="Jiang L."/>
            <person name="Stanley S.T."/>
            <person name="Wilson M.R."/>
            <person name="Decker R.S."/>
            <person name="Read T.D."/>
            <person name="Worsham P."/>
            <person name="Keim P.S."/>
            <person name="Salzberg S.L."/>
            <person name="Fraser-Liggett C.M."/>
            <person name="Rasko D.A."/>
        </authorList>
    </citation>
    <scope>NUCLEOTIDE SEQUENCE [LARGE SCALE GENOMIC DNA]</scope>
    <source>
        <strain>Ames ancestor</strain>
    </source>
</reference>
<reference key="3">
    <citation type="submission" date="2004-01" db="EMBL/GenBank/DDBJ databases">
        <title>Complete genome sequence of Bacillus anthracis Sterne.</title>
        <authorList>
            <person name="Brettin T.S."/>
            <person name="Bruce D."/>
            <person name="Challacombe J.F."/>
            <person name="Gilna P."/>
            <person name="Han C."/>
            <person name="Hill K."/>
            <person name="Hitchcock P."/>
            <person name="Jackson P."/>
            <person name="Keim P."/>
            <person name="Longmire J."/>
            <person name="Lucas S."/>
            <person name="Okinaka R."/>
            <person name="Richardson P."/>
            <person name="Rubin E."/>
            <person name="Tice H."/>
        </authorList>
    </citation>
    <scope>NUCLEOTIDE SEQUENCE [LARGE SCALE GENOMIC DNA]</scope>
    <source>
        <strain>Sterne</strain>
    </source>
</reference>
<protein>
    <recommendedName>
        <fullName evidence="1">Segregation and condensation protein B</fullName>
    </recommendedName>
</protein>